<organism>
    <name type="scientific">Shewanella sp. (strain MR-7)</name>
    <dbReference type="NCBI Taxonomy" id="60481"/>
    <lineage>
        <taxon>Bacteria</taxon>
        <taxon>Pseudomonadati</taxon>
        <taxon>Pseudomonadota</taxon>
        <taxon>Gammaproteobacteria</taxon>
        <taxon>Alteromonadales</taxon>
        <taxon>Shewanellaceae</taxon>
        <taxon>Shewanella</taxon>
    </lineage>
</organism>
<keyword id="KW-0378">Hydrolase</keyword>
<keyword id="KW-0479">Metal-binding</keyword>
<keyword id="KW-0862">Zinc</keyword>
<proteinExistence type="inferred from homology"/>
<sequence>MQDRFIRSITQLPTPLADALIPLLHQNFAGHIDAQQLAELVQSSQMTEAEVLLALLPIAAALAKPPISEFYVGAIAKGKSGDIYMGANLELPGEALFHSVHAEQSAISHAWLSGESQIVDMIVNASPCGHCRQFMNELVEGGQIKIHLPSQDSHLLSYYLPYAFGPKDLNVQSPLLVKHETEFALDSSDPMVIEALDHAGLSYAPYTQSYAAVVLETADGATYCGRYAENAAFNPSMLPMQMALSNLTRHNRDFGEIRRAVLVESSQGKISLVGATMDALHPVAAIELEHIVVDPV</sequence>
<evidence type="ECO:0000255" key="1">
    <source>
        <dbReference type="HAMAP-Rule" id="MF_01558"/>
    </source>
</evidence>
<evidence type="ECO:0000255" key="2">
    <source>
        <dbReference type="PROSITE-ProRule" id="PRU01083"/>
    </source>
</evidence>
<gene>
    <name evidence="1" type="primary">cdd</name>
    <name type="ordered locus">Shewmr7_2481</name>
</gene>
<comment type="function">
    <text evidence="1">This enzyme scavenges exogenous and endogenous cytidine and 2'-deoxycytidine for UMP synthesis.</text>
</comment>
<comment type="catalytic activity">
    <reaction evidence="1">
        <text>cytidine + H2O + H(+) = uridine + NH4(+)</text>
        <dbReference type="Rhea" id="RHEA:16069"/>
        <dbReference type="ChEBI" id="CHEBI:15377"/>
        <dbReference type="ChEBI" id="CHEBI:15378"/>
        <dbReference type="ChEBI" id="CHEBI:16704"/>
        <dbReference type="ChEBI" id="CHEBI:17562"/>
        <dbReference type="ChEBI" id="CHEBI:28938"/>
        <dbReference type="EC" id="3.5.4.5"/>
    </reaction>
</comment>
<comment type="catalytic activity">
    <reaction evidence="1">
        <text>2'-deoxycytidine + H2O + H(+) = 2'-deoxyuridine + NH4(+)</text>
        <dbReference type="Rhea" id="RHEA:13433"/>
        <dbReference type="ChEBI" id="CHEBI:15377"/>
        <dbReference type="ChEBI" id="CHEBI:15378"/>
        <dbReference type="ChEBI" id="CHEBI:15698"/>
        <dbReference type="ChEBI" id="CHEBI:16450"/>
        <dbReference type="ChEBI" id="CHEBI:28938"/>
        <dbReference type="EC" id="3.5.4.5"/>
    </reaction>
</comment>
<comment type="cofactor">
    <cofactor evidence="1">
        <name>Zn(2+)</name>
        <dbReference type="ChEBI" id="CHEBI:29105"/>
    </cofactor>
    <text evidence="1">Binds 1 zinc ion.</text>
</comment>
<comment type="subunit">
    <text evidence="1">Homodimer.</text>
</comment>
<comment type="similarity">
    <text evidence="1">Belongs to the cytidine and deoxycytidylate deaminase family.</text>
</comment>
<accession>Q0HTT9</accession>
<reference key="1">
    <citation type="submission" date="2006-08" db="EMBL/GenBank/DDBJ databases">
        <title>Complete sequence of chromosome 1 of Shewanella sp. MR-7.</title>
        <authorList>
            <person name="Copeland A."/>
            <person name="Lucas S."/>
            <person name="Lapidus A."/>
            <person name="Barry K."/>
            <person name="Detter J.C."/>
            <person name="Glavina del Rio T."/>
            <person name="Hammon N."/>
            <person name="Israni S."/>
            <person name="Dalin E."/>
            <person name="Tice H."/>
            <person name="Pitluck S."/>
            <person name="Kiss H."/>
            <person name="Brettin T."/>
            <person name="Bruce D."/>
            <person name="Han C."/>
            <person name="Tapia R."/>
            <person name="Gilna P."/>
            <person name="Schmutz J."/>
            <person name="Larimer F."/>
            <person name="Land M."/>
            <person name="Hauser L."/>
            <person name="Kyrpides N."/>
            <person name="Mikhailova N."/>
            <person name="Nealson K."/>
            <person name="Konstantinidis K."/>
            <person name="Klappenbach J."/>
            <person name="Tiedje J."/>
            <person name="Richardson P."/>
        </authorList>
    </citation>
    <scope>NUCLEOTIDE SEQUENCE [LARGE SCALE GENOMIC DNA]</scope>
    <source>
        <strain>MR-7</strain>
    </source>
</reference>
<protein>
    <recommendedName>
        <fullName evidence="1">Cytidine deaminase</fullName>
        <ecNumber evidence="1">3.5.4.5</ecNumber>
    </recommendedName>
    <alternativeName>
        <fullName evidence="1">Cytidine aminohydrolase</fullName>
        <shortName evidence="1">CDA</shortName>
    </alternativeName>
</protein>
<dbReference type="EC" id="3.5.4.5" evidence="1"/>
<dbReference type="EMBL" id="CP000444">
    <property type="protein sequence ID" value="ABI43466.1"/>
    <property type="molecule type" value="Genomic_DNA"/>
</dbReference>
<dbReference type="SMR" id="Q0HTT9"/>
<dbReference type="KEGG" id="shm:Shewmr7_2481"/>
<dbReference type="HOGENOM" id="CLU_052424_0_0_6"/>
<dbReference type="GO" id="GO:0005829">
    <property type="term" value="C:cytosol"/>
    <property type="evidence" value="ECO:0007669"/>
    <property type="project" value="TreeGrafter"/>
</dbReference>
<dbReference type="GO" id="GO:0004126">
    <property type="term" value="F:cytidine deaminase activity"/>
    <property type="evidence" value="ECO:0007669"/>
    <property type="project" value="UniProtKB-UniRule"/>
</dbReference>
<dbReference type="GO" id="GO:0042802">
    <property type="term" value="F:identical protein binding"/>
    <property type="evidence" value="ECO:0007669"/>
    <property type="project" value="UniProtKB-ARBA"/>
</dbReference>
<dbReference type="GO" id="GO:0008270">
    <property type="term" value="F:zinc ion binding"/>
    <property type="evidence" value="ECO:0007669"/>
    <property type="project" value="UniProtKB-UniRule"/>
</dbReference>
<dbReference type="GO" id="GO:0009972">
    <property type="term" value="P:cytidine deamination"/>
    <property type="evidence" value="ECO:0007669"/>
    <property type="project" value="InterPro"/>
</dbReference>
<dbReference type="CDD" id="cd01283">
    <property type="entry name" value="cytidine_deaminase"/>
    <property type="match status" value="1"/>
</dbReference>
<dbReference type="FunFam" id="3.40.140.10:FF:000007">
    <property type="entry name" value="Cytidine deaminase"/>
    <property type="match status" value="1"/>
</dbReference>
<dbReference type="FunFam" id="3.40.140.10:FF:000144">
    <property type="entry name" value="Cytidine deaminase"/>
    <property type="match status" value="1"/>
</dbReference>
<dbReference type="Gene3D" id="3.40.140.10">
    <property type="entry name" value="Cytidine Deaminase, domain 2"/>
    <property type="match status" value="2"/>
</dbReference>
<dbReference type="HAMAP" id="MF_01558">
    <property type="entry name" value="Cyt_deam"/>
    <property type="match status" value="1"/>
</dbReference>
<dbReference type="InterPro" id="IPR016192">
    <property type="entry name" value="APOBEC/CMP_deaminase_Zn-bd"/>
</dbReference>
<dbReference type="InterPro" id="IPR002125">
    <property type="entry name" value="CMP_dCMP_dom"/>
</dbReference>
<dbReference type="InterPro" id="IPR013171">
    <property type="entry name" value="Cyd/dCyd_deaminase_Zn-bd"/>
</dbReference>
<dbReference type="InterPro" id="IPR050202">
    <property type="entry name" value="Cyt/Deoxycyt_deaminase"/>
</dbReference>
<dbReference type="InterPro" id="IPR016193">
    <property type="entry name" value="Cytidine_deaminase-like"/>
</dbReference>
<dbReference type="InterPro" id="IPR020797">
    <property type="entry name" value="Cytidine_deaminase_bacteria"/>
</dbReference>
<dbReference type="NCBIfam" id="NF006537">
    <property type="entry name" value="PRK09027.1"/>
    <property type="match status" value="1"/>
</dbReference>
<dbReference type="PANTHER" id="PTHR11644">
    <property type="entry name" value="CYTIDINE DEAMINASE"/>
    <property type="match status" value="1"/>
</dbReference>
<dbReference type="PANTHER" id="PTHR11644:SF2">
    <property type="entry name" value="CYTIDINE DEAMINASE"/>
    <property type="match status" value="1"/>
</dbReference>
<dbReference type="Pfam" id="PF00383">
    <property type="entry name" value="dCMP_cyt_deam_1"/>
    <property type="match status" value="1"/>
</dbReference>
<dbReference type="Pfam" id="PF08211">
    <property type="entry name" value="dCMP_cyt_deam_2"/>
    <property type="match status" value="1"/>
</dbReference>
<dbReference type="PIRSF" id="PIRSF006334">
    <property type="entry name" value="Cdd_plus_pseudo"/>
    <property type="match status" value="1"/>
</dbReference>
<dbReference type="SUPFAM" id="SSF53927">
    <property type="entry name" value="Cytidine deaminase-like"/>
    <property type="match status" value="2"/>
</dbReference>
<dbReference type="PROSITE" id="PS00903">
    <property type="entry name" value="CYT_DCMP_DEAMINASES_1"/>
    <property type="match status" value="1"/>
</dbReference>
<dbReference type="PROSITE" id="PS51747">
    <property type="entry name" value="CYT_DCMP_DEAMINASES_2"/>
    <property type="match status" value="2"/>
</dbReference>
<feature type="chain" id="PRO_1000068967" description="Cytidine deaminase">
    <location>
        <begin position="1"/>
        <end position="296"/>
    </location>
</feature>
<feature type="domain" description="CMP/dCMP-type deaminase 1" evidence="2">
    <location>
        <begin position="47"/>
        <end position="167"/>
    </location>
</feature>
<feature type="domain" description="CMP/dCMP-type deaminase 2" evidence="2">
    <location>
        <begin position="186"/>
        <end position="296"/>
    </location>
</feature>
<feature type="active site" description="Proton donor" evidence="1">
    <location>
        <position position="103"/>
    </location>
</feature>
<feature type="binding site" evidence="1">
    <location>
        <begin position="88"/>
        <end position="90"/>
    </location>
    <ligand>
        <name>substrate</name>
    </ligand>
</feature>
<feature type="binding site" evidence="1">
    <location>
        <position position="101"/>
    </location>
    <ligand>
        <name>Zn(2+)</name>
        <dbReference type="ChEBI" id="CHEBI:29105"/>
        <note>catalytic</note>
    </ligand>
</feature>
<feature type="binding site" evidence="1">
    <location>
        <position position="128"/>
    </location>
    <ligand>
        <name>Zn(2+)</name>
        <dbReference type="ChEBI" id="CHEBI:29105"/>
        <note>catalytic</note>
    </ligand>
</feature>
<feature type="binding site" evidence="1">
    <location>
        <position position="131"/>
    </location>
    <ligand>
        <name>Zn(2+)</name>
        <dbReference type="ChEBI" id="CHEBI:29105"/>
        <note>catalytic</note>
    </ligand>
</feature>
<name>CDD_SHESR</name>